<gene>
    <name evidence="1" type="primary">yhbQ</name>
    <name type="ordered locus">STY3454</name>
    <name type="ordered locus">t3191</name>
</gene>
<accession>P67350</accession>
<accession>Q8XGW2</accession>
<evidence type="ECO:0000255" key="1">
    <source>
        <dbReference type="HAMAP-Rule" id="MF_01029"/>
    </source>
</evidence>
<evidence type="ECO:0000305" key="2"/>
<dbReference type="EMBL" id="AL513382">
    <property type="protein sequence ID" value="CAD07793.1"/>
    <property type="status" value="ALT_INIT"/>
    <property type="molecule type" value="Genomic_DNA"/>
</dbReference>
<dbReference type="EMBL" id="AE014613">
    <property type="protein sequence ID" value="AAO70729.1"/>
    <property type="status" value="ALT_INIT"/>
    <property type="molecule type" value="Genomic_DNA"/>
</dbReference>
<dbReference type="PIR" id="AC0900">
    <property type="entry name" value="AC0900"/>
</dbReference>
<dbReference type="RefSeq" id="NP_457655.1">
    <property type="nucleotide sequence ID" value="NC_003198.1"/>
</dbReference>
<dbReference type="SMR" id="P67350"/>
<dbReference type="STRING" id="220341.gene:17587304"/>
<dbReference type="KEGG" id="stt:t3191"/>
<dbReference type="KEGG" id="sty:STY3454"/>
<dbReference type="PATRIC" id="fig|220341.7.peg.3516"/>
<dbReference type="eggNOG" id="COG2827">
    <property type="taxonomic scope" value="Bacteria"/>
</dbReference>
<dbReference type="HOGENOM" id="CLU_135650_0_1_6"/>
<dbReference type="OMA" id="VYVEQWP"/>
<dbReference type="Proteomes" id="UP000000541">
    <property type="component" value="Chromosome"/>
</dbReference>
<dbReference type="Proteomes" id="UP000002670">
    <property type="component" value="Chromosome"/>
</dbReference>
<dbReference type="CDD" id="cd10456">
    <property type="entry name" value="GIY-YIG_UPF0213"/>
    <property type="match status" value="1"/>
</dbReference>
<dbReference type="Gene3D" id="3.40.1440.10">
    <property type="entry name" value="GIY-YIG endonuclease"/>
    <property type="match status" value="1"/>
</dbReference>
<dbReference type="HAMAP" id="MF_01029">
    <property type="entry name" value="UPF0213"/>
    <property type="match status" value="1"/>
</dbReference>
<dbReference type="InterPro" id="IPR000305">
    <property type="entry name" value="GIY-YIG_endonuc"/>
</dbReference>
<dbReference type="InterPro" id="IPR035901">
    <property type="entry name" value="GIY-YIG_endonuc_sf"/>
</dbReference>
<dbReference type="InterPro" id="IPR050190">
    <property type="entry name" value="UPF0213_domain"/>
</dbReference>
<dbReference type="InterPro" id="IPR022992">
    <property type="entry name" value="UPF0213_GIY-YIG_endonuc"/>
</dbReference>
<dbReference type="PANTHER" id="PTHR34477">
    <property type="entry name" value="UPF0213 PROTEIN YHBQ"/>
    <property type="match status" value="1"/>
</dbReference>
<dbReference type="PANTHER" id="PTHR34477:SF1">
    <property type="entry name" value="UPF0213 PROTEIN YHBQ"/>
    <property type="match status" value="1"/>
</dbReference>
<dbReference type="Pfam" id="PF01541">
    <property type="entry name" value="GIY-YIG"/>
    <property type="match status" value="1"/>
</dbReference>
<dbReference type="SMART" id="SM00465">
    <property type="entry name" value="GIYc"/>
    <property type="match status" value="1"/>
</dbReference>
<dbReference type="SUPFAM" id="SSF82771">
    <property type="entry name" value="GIY-YIG endonuclease"/>
    <property type="match status" value="1"/>
</dbReference>
<dbReference type="PROSITE" id="PS50164">
    <property type="entry name" value="GIY_YIG"/>
    <property type="match status" value="1"/>
</dbReference>
<proteinExistence type="inferred from homology"/>
<organism>
    <name type="scientific">Salmonella typhi</name>
    <dbReference type="NCBI Taxonomy" id="90370"/>
    <lineage>
        <taxon>Bacteria</taxon>
        <taxon>Pseudomonadati</taxon>
        <taxon>Pseudomonadota</taxon>
        <taxon>Gammaproteobacteria</taxon>
        <taxon>Enterobacterales</taxon>
        <taxon>Enterobacteriaceae</taxon>
        <taxon>Salmonella</taxon>
    </lineage>
</organism>
<feature type="chain" id="PRO_0000161378" description="UPF0213 protein YhbQ">
    <location>
        <begin position="1"/>
        <end position="100"/>
    </location>
</feature>
<feature type="domain" description="GIY-YIG" evidence="1">
    <location>
        <begin position="2"/>
        <end position="77"/>
    </location>
</feature>
<protein>
    <recommendedName>
        <fullName evidence="1">UPF0213 protein YhbQ</fullName>
    </recommendedName>
</protein>
<comment type="similarity">
    <text evidence="1">Belongs to the UPF0213 family.</text>
</comment>
<comment type="sequence caution" evidence="2">
    <conflict type="erroneous initiation">
        <sequence resource="EMBL-CDS" id="AAO70729"/>
    </conflict>
</comment>
<comment type="sequence caution" evidence="2">
    <conflict type="erroneous initiation">
        <sequence resource="EMBL-CDS" id="CAD07793"/>
    </conflict>
</comment>
<name>YHBQ_SALTI</name>
<reference key="1">
    <citation type="journal article" date="2001" name="Nature">
        <title>Complete genome sequence of a multiple drug resistant Salmonella enterica serovar Typhi CT18.</title>
        <authorList>
            <person name="Parkhill J."/>
            <person name="Dougan G."/>
            <person name="James K.D."/>
            <person name="Thomson N.R."/>
            <person name="Pickard D."/>
            <person name="Wain J."/>
            <person name="Churcher C.M."/>
            <person name="Mungall K.L."/>
            <person name="Bentley S.D."/>
            <person name="Holden M.T.G."/>
            <person name="Sebaihia M."/>
            <person name="Baker S."/>
            <person name="Basham D."/>
            <person name="Brooks K."/>
            <person name="Chillingworth T."/>
            <person name="Connerton P."/>
            <person name="Cronin A."/>
            <person name="Davis P."/>
            <person name="Davies R.M."/>
            <person name="Dowd L."/>
            <person name="White N."/>
            <person name="Farrar J."/>
            <person name="Feltwell T."/>
            <person name="Hamlin N."/>
            <person name="Haque A."/>
            <person name="Hien T.T."/>
            <person name="Holroyd S."/>
            <person name="Jagels K."/>
            <person name="Krogh A."/>
            <person name="Larsen T.S."/>
            <person name="Leather S."/>
            <person name="Moule S."/>
            <person name="O'Gaora P."/>
            <person name="Parry C."/>
            <person name="Quail M.A."/>
            <person name="Rutherford K.M."/>
            <person name="Simmonds M."/>
            <person name="Skelton J."/>
            <person name="Stevens K."/>
            <person name="Whitehead S."/>
            <person name="Barrell B.G."/>
        </authorList>
    </citation>
    <scope>NUCLEOTIDE SEQUENCE [LARGE SCALE GENOMIC DNA]</scope>
    <source>
        <strain>CT18</strain>
    </source>
</reference>
<reference key="2">
    <citation type="journal article" date="2003" name="J. Bacteriol.">
        <title>Comparative genomics of Salmonella enterica serovar Typhi strains Ty2 and CT18.</title>
        <authorList>
            <person name="Deng W."/>
            <person name="Liou S.-R."/>
            <person name="Plunkett G. III"/>
            <person name="Mayhew G.F."/>
            <person name="Rose D.J."/>
            <person name="Burland V."/>
            <person name="Kodoyianni V."/>
            <person name="Schwartz D.C."/>
            <person name="Blattner F.R."/>
        </authorList>
    </citation>
    <scope>NUCLEOTIDE SEQUENCE [LARGE SCALE GENOMIC DNA]</scope>
    <source>
        <strain>ATCC 700931 / Ty2</strain>
    </source>
</reference>
<sequence>MTPWYLYLIRTADNALYTGITTDVARRYRQHQTGKGAKALRGKGELTLAFAAQVGDRSLALRIEYRIKQLTKRQKERLVTEREAFEALLSSLQTPVLKND</sequence>